<gene>
    <name evidence="1" type="primary">clpX</name>
    <name type="ordered locus">ASA_1890</name>
</gene>
<reference key="1">
    <citation type="journal article" date="2008" name="BMC Genomics">
        <title>The genome of Aeromonas salmonicida subsp. salmonicida A449: insights into the evolution of a fish pathogen.</title>
        <authorList>
            <person name="Reith M.E."/>
            <person name="Singh R.K."/>
            <person name="Curtis B."/>
            <person name="Boyd J.M."/>
            <person name="Bouevitch A."/>
            <person name="Kimball J."/>
            <person name="Munholland J."/>
            <person name="Murphy C."/>
            <person name="Sarty D."/>
            <person name="Williams J."/>
            <person name="Nash J.H."/>
            <person name="Johnson S.C."/>
            <person name="Brown L.L."/>
        </authorList>
    </citation>
    <scope>NUCLEOTIDE SEQUENCE [LARGE SCALE GENOMIC DNA]</scope>
    <source>
        <strain>A449</strain>
    </source>
</reference>
<protein>
    <recommendedName>
        <fullName evidence="1">ATP-dependent Clp protease ATP-binding subunit ClpX</fullName>
    </recommendedName>
</protein>
<organism>
    <name type="scientific">Aeromonas salmonicida (strain A449)</name>
    <dbReference type="NCBI Taxonomy" id="382245"/>
    <lineage>
        <taxon>Bacteria</taxon>
        <taxon>Pseudomonadati</taxon>
        <taxon>Pseudomonadota</taxon>
        <taxon>Gammaproteobacteria</taxon>
        <taxon>Aeromonadales</taxon>
        <taxon>Aeromonadaceae</taxon>
        <taxon>Aeromonas</taxon>
    </lineage>
</organism>
<dbReference type="EMBL" id="CP000644">
    <property type="protein sequence ID" value="ABO89965.1"/>
    <property type="molecule type" value="Genomic_DNA"/>
</dbReference>
<dbReference type="RefSeq" id="WP_005315369.1">
    <property type="nucleotide sequence ID" value="NC_009348.1"/>
</dbReference>
<dbReference type="SMR" id="A4SM43"/>
<dbReference type="STRING" id="29491.GCA_000820065_02742"/>
<dbReference type="KEGG" id="asa:ASA_1890"/>
<dbReference type="PATRIC" id="fig|382245.13.peg.1877"/>
<dbReference type="eggNOG" id="COG1219">
    <property type="taxonomic scope" value="Bacteria"/>
</dbReference>
<dbReference type="HOGENOM" id="CLU_014218_8_2_6"/>
<dbReference type="Proteomes" id="UP000000225">
    <property type="component" value="Chromosome"/>
</dbReference>
<dbReference type="GO" id="GO:0009376">
    <property type="term" value="C:HslUV protease complex"/>
    <property type="evidence" value="ECO:0007669"/>
    <property type="project" value="TreeGrafter"/>
</dbReference>
<dbReference type="GO" id="GO:0005524">
    <property type="term" value="F:ATP binding"/>
    <property type="evidence" value="ECO:0007669"/>
    <property type="project" value="UniProtKB-UniRule"/>
</dbReference>
<dbReference type="GO" id="GO:0016887">
    <property type="term" value="F:ATP hydrolysis activity"/>
    <property type="evidence" value="ECO:0007669"/>
    <property type="project" value="InterPro"/>
</dbReference>
<dbReference type="GO" id="GO:0140662">
    <property type="term" value="F:ATP-dependent protein folding chaperone"/>
    <property type="evidence" value="ECO:0007669"/>
    <property type="project" value="InterPro"/>
</dbReference>
<dbReference type="GO" id="GO:0046983">
    <property type="term" value="F:protein dimerization activity"/>
    <property type="evidence" value="ECO:0007669"/>
    <property type="project" value="InterPro"/>
</dbReference>
<dbReference type="GO" id="GO:0051082">
    <property type="term" value="F:unfolded protein binding"/>
    <property type="evidence" value="ECO:0007669"/>
    <property type="project" value="UniProtKB-UniRule"/>
</dbReference>
<dbReference type="GO" id="GO:0008270">
    <property type="term" value="F:zinc ion binding"/>
    <property type="evidence" value="ECO:0007669"/>
    <property type="project" value="InterPro"/>
</dbReference>
<dbReference type="GO" id="GO:0051301">
    <property type="term" value="P:cell division"/>
    <property type="evidence" value="ECO:0007669"/>
    <property type="project" value="TreeGrafter"/>
</dbReference>
<dbReference type="GO" id="GO:0051603">
    <property type="term" value="P:proteolysis involved in protein catabolic process"/>
    <property type="evidence" value="ECO:0007669"/>
    <property type="project" value="TreeGrafter"/>
</dbReference>
<dbReference type="CDD" id="cd19497">
    <property type="entry name" value="RecA-like_ClpX"/>
    <property type="match status" value="1"/>
</dbReference>
<dbReference type="FunFam" id="1.10.8.60:FF:000002">
    <property type="entry name" value="ATP-dependent Clp protease ATP-binding subunit ClpX"/>
    <property type="match status" value="1"/>
</dbReference>
<dbReference type="FunFam" id="3.40.50.300:FF:000005">
    <property type="entry name" value="ATP-dependent Clp protease ATP-binding subunit ClpX"/>
    <property type="match status" value="1"/>
</dbReference>
<dbReference type="Gene3D" id="1.10.8.60">
    <property type="match status" value="1"/>
</dbReference>
<dbReference type="Gene3D" id="6.20.220.10">
    <property type="entry name" value="ClpX chaperone, C4-type zinc finger domain"/>
    <property type="match status" value="1"/>
</dbReference>
<dbReference type="Gene3D" id="3.40.50.300">
    <property type="entry name" value="P-loop containing nucleotide triphosphate hydrolases"/>
    <property type="match status" value="1"/>
</dbReference>
<dbReference type="HAMAP" id="MF_00175">
    <property type="entry name" value="ClpX"/>
    <property type="match status" value="1"/>
</dbReference>
<dbReference type="InterPro" id="IPR003593">
    <property type="entry name" value="AAA+_ATPase"/>
</dbReference>
<dbReference type="InterPro" id="IPR050052">
    <property type="entry name" value="ATP-dep_Clp_protease_ClpX"/>
</dbReference>
<dbReference type="InterPro" id="IPR003959">
    <property type="entry name" value="ATPase_AAA_core"/>
</dbReference>
<dbReference type="InterPro" id="IPR019489">
    <property type="entry name" value="Clp_ATPase_C"/>
</dbReference>
<dbReference type="InterPro" id="IPR004487">
    <property type="entry name" value="Clp_protease_ATP-bd_su_ClpX"/>
</dbReference>
<dbReference type="InterPro" id="IPR046425">
    <property type="entry name" value="ClpX_bact"/>
</dbReference>
<dbReference type="InterPro" id="IPR027417">
    <property type="entry name" value="P-loop_NTPase"/>
</dbReference>
<dbReference type="InterPro" id="IPR010603">
    <property type="entry name" value="Znf_CppX_C4"/>
</dbReference>
<dbReference type="InterPro" id="IPR038366">
    <property type="entry name" value="Znf_CppX_C4_sf"/>
</dbReference>
<dbReference type="NCBIfam" id="TIGR00382">
    <property type="entry name" value="clpX"/>
    <property type="match status" value="1"/>
</dbReference>
<dbReference type="NCBIfam" id="NF003745">
    <property type="entry name" value="PRK05342.1"/>
    <property type="match status" value="1"/>
</dbReference>
<dbReference type="PANTHER" id="PTHR48102:SF7">
    <property type="entry name" value="ATP-DEPENDENT CLP PROTEASE ATP-BINDING SUBUNIT CLPX-LIKE, MITOCHONDRIAL"/>
    <property type="match status" value="1"/>
</dbReference>
<dbReference type="PANTHER" id="PTHR48102">
    <property type="entry name" value="ATP-DEPENDENT CLP PROTEASE ATP-BINDING SUBUNIT CLPX-LIKE, MITOCHONDRIAL-RELATED"/>
    <property type="match status" value="1"/>
</dbReference>
<dbReference type="Pfam" id="PF07724">
    <property type="entry name" value="AAA_2"/>
    <property type="match status" value="1"/>
</dbReference>
<dbReference type="Pfam" id="PF10431">
    <property type="entry name" value="ClpB_D2-small"/>
    <property type="match status" value="1"/>
</dbReference>
<dbReference type="Pfam" id="PF06689">
    <property type="entry name" value="zf-C4_ClpX"/>
    <property type="match status" value="1"/>
</dbReference>
<dbReference type="SMART" id="SM00382">
    <property type="entry name" value="AAA"/>
    <property type="match status" value="1"/>
</dbReference>
<dbReference type="SMART" id="SM01086">
    <property type="entry name" value="ClpB_D2-small"/>
    <property type="match status" value="1"/>
</dbReference>
<dbReference type="SMART" id="SM00994">
    <property type="entry name" value="zf-C4_ClpX"/>
    <property type="match status" value="1"/>
</dbReference>
<dbReference type="SUPFAM" id="SSF57716">
    <property type="entry name" value="Glucocorticoid receptor-like (DNA-binding domain)"/>
    <property type="match status" value="1"/>
</dbReference>
<dbReference type="SUPFAM" id="SSF52540">
    <property type="entry name" value="P-loop containing nucleoside triphosphate hydrolases"/>
    <property type="match status" value="1"/>
</dbReference>
<dbReference type="PROSITE" id="PS51902">
    <property type="entry name" value="CLPX_ZB"/>
    <property type="match status" value="1"/>
</dbReference>
<keyword id="KW-0067">ATP-binding</keyword>
<keyword id="KW-0143">Chaperone</keyword>
<keyword id="KW-0479">Metal-binding</keyword>
<keyword id="KW-0547">Nucleotide-binding</keyword>
<keyword id="KW-0862">Zinc</keyword>
<evidence type="ECO:0000255" key="1">
    <source>
        <dbReference type="HAMAP-Rule" id="MF_00175"/>
    </source>
</evidence>
<evidence type="ECO:0000255" key="2">
    <source>
        <dbReference type="PROSITE-ProRule" id="PRU01250"/>
    </source>
</evidence>
<sequence length="424" mass="46463">MTEKRKGEGDKLLYCSFCGKSQHEVRKLIAGPSVYICDECVELCNDIIREEIREISPKRDGSELPTPHEIRAHLDDYVIGQEYAKKVLAVAVYNHYKRLRNSSEAGGVELGKSNILLIGPTGSGKTLLAETLARLLDVPFTMADATTLTEAGYVGEDVENIIQKLLQKCDYDVEKAQRGIVYIDEIDKISRKSDNPSITRDVSGEGVQQALLKLIEGTIASVPPQGGRKHPQQEFLQVDTSKILFICGGAFAGLDKVIEQRSVKGTGIGFGADVKSKNARATLSENFAKVEPEDLIKYGLIPEFIGRLPVVATLTELDEAALIQILKEPKNALTKQYAALFDLEGVELEFRDDALNAIAHKAMERKTGARGLRSIVEAVLLDTMYDLPSLEGVSKVVIDETVIKGDSAPLMIYENPESQAAVSE</sequence>
<feature type="chain" id="PRO_1000189677" description="ATP-dependent Clp protease ATP-binding subunit ClpX">
    <location>
        <begin position="1"/>
        <end position="424"/>
    </location>
</feature>
<feature type="domain" description="ClpX-type ZB" evidence="2">
    <location>
        <begin position="3"/>
        <end position="56"/>
    </location>
</feature>
<feature type="binding site" evidence="2">
    <location>
        <position position="15"/>
    </location>
    <ligand>
        <name>Zn(2+)</name>
        <dbReference type="ChEBI" id="CHEBI:29105"/>
    </ligand>
</feature>
<feature type="binding site" evidence="2">
    <location>
        <position position="18"/>
    </location>
    <ligand>
        <name>Zn(2+)</name>
        <dbReference type="ChEBI" id="CHEBI:29105"/>
    </ligand>
</feature>
<feature type="binding site" evidence="2">
    <location>
        <position position="37"/>
    </location>
    <ligand>
        <name>Zn(2+)</name>
        <dbReference type="ChEBI" id="CHEBI:29105"/>
    </ligand>
</feature>
<feature type="binding site" evidence="2">
    <location>
        <position position="40"/>
    </location>
    <ligand>
        <name>Zn(2+)</name>
        <dbReference type="ChEBI" id="CHEBI:29105"/>
    </ligand>
</feature>
<feature type="binding site" evidence="1">
    <location>
        <begin position="120"/>
        <end position="127"/>
    </location>
    <ligand>
        <name>ATP</name>
        <dbReference type="ChEBI" id="CHEBI:30616"/>
    </ligand>
</feature>
<comment type="function">
    <text evidence="1">ATP-dependent specificity component of the Clp protease. It directs the protease to specific substrates. Can perform chaperone functions in the absence of ClpP.</text>
</comment>
<comment type="subunit">
    <text evidence="1">Component of the ClpX-ClpP complex. Forms a hexameric ring that, in the presence of ATP, binds to fourteen ClpP subunits assembled into a disk-like structure with a central cavity, resembling the structure of eukaryotic proteasomes.</text>
</comment>
<comment type="similarity">
    <text evidence="1">Belongs to the ClpX chaperone family.</text>
</comment>
<name>CLPX_AERS4</name>
<proteinExistence type="inferred from homology"/>
<accession>A4SM43</accession>